<reference key="1">
    <citation type="journal article" date="2006" name="Science">
        <title>Large-scale sequence analysis of avian influenza isolates.</title>
        <authorList>
            <person name="Obenauer J.C."/>
            <person name="Denson J."/>
            <person name="Mehta P.K."/>
            <person name="Su X."/>
            <person name="Mukatira S."/>
            <person name="Finkelstein D.B."/>
            <person name="Xu X."/>
            <person name="Wang J."/>
            <person name="Ma J."/>
            <person name="Fan Y."/>
            <person name="Rakestraw K.M."/>
            <person name="Webster R.G."/>
            <person name="Hoffmann E."/>
            <person name="Krauss S."/>
            <person name="Zheng J."/>
            <person name="Zhang Z."/>
            <person name="Naeve C.W."/>
        </authorList>
    </citation>
    <scope>NUCLEOTIDE SEQUENCE [GENOMIC RNA]</scope>
</reference>
<dbReference type="EMBL" id="CY015077">
    <property type="protein sequence ID" value="ABI85101.1"/>
    <property type="molecule type" value="Genomic_RNA"/>
</dbReference>
<dbReference type="SMR" id="Q0A2I2"/>
<dbReference type="Proteomes" id="UP000008584">
    <property type="component" value="Genome"/>
</dbReference>
<dbReference type="GO" id="GO:0042025">
    <property type="term" value="C:host cell nucleus"/>
    <property type="evidence" value="ECO:0007669"/>
    <property type="project" value="UniProtKB-SubCell"/>
</dbReference>
<dbReference type="GO" id="GO:0044423">
    <property type="term" value="C:virion component"/>
    <property type="evidence" value="ECO:0007669"/>
    <property type="project" value="UniProtKB-UniRule"/>
</dbReference>
<dbReference type="GO" id="GO:0039675">
    <property type="term" value="P:exit of virus from host cell nucleus through nuclear pore"/>
    <property type="evidence" value="ECO:0007669"/>
    <property type="project" value="UniProtKB-UniRule"/>
</dbReference>
<dbReference type="Gene3D" id="1.10.287.230">
    <property type="match status" value="1"/>
</dbReference>
<dbReference type="Gene3D" id="1.10.287.10">
    <property type="entry name" value="S15/NS1, RNA-binding"/>
    <property type="match status" value="1"/>
</dbReference>
<dbReference type="HAMAP" id="MF_04067">
    <property type="entry name" value="INFV_NEP"/>
    <property type="match status" value="1"/>
</dbReference>
<dbReference type="InterPro" id="IPR000968">
    <property type="entry name" value="Flu_NS2"/>
</dbReference>
<dbReference type="Pfam" id="PF00601">
    <property type="entry name" value="Flu_NS2"/>
    <property type="match status" value="1"/>
</dbReference>
<dbReference type="SUPFAM" id="SSF101156">
    <property type="entry name" value="Nonstructural protein ns2, Nep, M1-binding domain"/>
    <property type="match status" value="1"/>
</dbReference>
<comment type="function">
    <text evidence="1">Mediates the nuclear export of encapsidated genomic RNAs (ribonucleoproteins, RNPs). Acts as an adapter between viral RNPs complexes and the nuclear export machinery of the cell. Possesses no intrinsic RNA-binding activity, but includes a C-terminal M1-binding domain. This domain is believed to allow recognition of RNPs bound to the protein M1. Since protein M1 is not available in large quantities before late stages of infection, such an indirect recognition mechanism probably ensures that genomic RNPs are not exported from the host nucleus until sufficient quantities of viral mRNA and progeny genomic RNA have been synthesized. Furthermore, the RNPs enter the host cytoplasm only when associated with the M1 protein that is necessary to guide them to the plasma membrane. May down-regulate viral RNA synthesis when overproduced.</text>
</comment>
<comment type="subunit">
    <text evidence="1">Interacts with protein M1. May interact with host nucleoporin RAB/HRB and exportin XPO1/CRM1.</text>
</comment>
<comment type="subcellular location">
    <subcellularLocation>
        <location evidence="1">Virion</location>
    </subcellularLocation>
    <subcellularLocation>
        <location evidence="1">Host nucleus</location>
    </subcellularLocation>
</comment>
<comment type="alternative products">
    <event type="alternative splicing"/>
    <isoform>
        <id>Q0A2I2-1</id>
        <name>NEP</name>
        <name>NS2</name>
        <sequence type="displayed"/>
    </isoform>
    <isoform>
        <id>Q0A2I1-1</id>
        <name>NS1</name>
        <sequence type="external"/>
    </isoform>
</comment>
<comment type="similarity">
    <text evidence="1">Belongs to the influenza viruses NEP family.</text>
</comment>
<feature type="chain" id="PRO_0000324226" description="Nuclear export protein">
    <location>
        <begin position="1"/>
        <end position="121"/>
    </location>
</feature>
<feature type="short sequence motif" description="Nuclear export signal" evidence="1">
    <location>
        <begin position="12"/>
        <end position="21"/>
    </location>
</feature>
<feature type="short sequence motif" description="Nuclear export signal" evidence="1">
    <location>
        <begin position="85"/>
        <end position="94"/>
    </location>
</feature>
<proteinExistence type="inferred from homology"/>
<sequence>MDSNTVSSFQDILMRMSKMQLGSSSEDLNGMITQFESLKLYRDSLGKAVMRMGDLHSLQSRNGNWRRQLSQKFEEIRWLIEEVRHRLKITENSFEQITFMQALQLLLEVEQEMRTFSFQLI</sequence>
<name>NEP_I83A5</name>
<evidence type="ECO:0000255" key="1">
    <source>
        <dbReference type="HAMAP-Rule" id="MF_04067"/>
    </source>
</evidence>
<accession>Q0A2I2</accession>
<gene>
    <name evidence="1" type="primary">NS</name>
</gene>
<keyword id="KW-0025">Alternative splicing</keyword>
<keyword id="KW-1048">Host nucleus</keyword>
<keyword id="KW-0945">Host-virus interaction</keyword>
<keyword id="KW-0813">Transport</keyword>
<keyword id="KW-0946">Virion</keyword>
<protein>
    <recommendedName>
        <fullName evidence="1">Nuclear export protein</fullName>
        <shortName evidence="1">NEP</shortName>
    </recommendedName>
    <alternativeName>
        <fullName evidence="1">Non-structural protein 2</fullName>
        <shortName evidence="1">NS2</shortName>
    </alternativeName>
</protein>
<organismHost>
    <name type="scientific">Aves</name>
    <dbReference type="NCBI Taxonomy" id="8782"/>
</organismHost>
<organism>
    <name type="scientific">Influenza A virus (strain A/Chicken/Pennsylvania/1/1983 H5N2)</name>
    <dbReference type="NCBI Taxonomy" id="385586"/>
    <lineage>
        <taxon>Viruses</taxon>
        <taxon>Riboviria</taxon>
        <taxon>Orthornavirae</taxon>
        <taxon>Negarnaviricota</taxon>
        <taxon>Polyploviricotina</taxon>
        <taxon>Insthoviricetes</taxon>
        <taxon>Articulavirales</taxon>
        <taxon>Orthomyxoviridae</taxon>
        <taxon>Alphainfluenzavirus</taxon>
        <taxon>Alphainfluenzavirus influenzae</taxon>
        <taxon>Influenza A virus</taxon>
    </lineage>
</organism>